<accession>P19181</accession>
<name>HV05_CARAU</name>
<sequence>MEFWLSWVFLVAILKGVQCEVQLVESGGGLIQPGGSLRLSCAASGFTVSSNYMSWVRQPPGKGLEWVSVIYSGGSTYYADSVKGRFTISRDNSKNTLYLQMNSLRAEDTAVYYCAR</sequence>
<organism>
    <name type="scientific">Carassius auratus</name>
    <name type="common">Goldfish</name>
    <dbReference type="NCBI Taxonomy" id="7957"/>
    <lineage>
        <taxon>Eukaryota</taxon>
        <taxon>Metazoa</taxon>
        <taxon>Chordata</taxon>
        <taxon>Craniata</taxon>
        <taxon>Vertebrata</taxon>
        <taxon>Euteleostomi</taxon>
        <taxon>Actinopterygii</taxon>
        <taxon>Neopterygii</taxon>
        <taxon>Teleostei</taxon>
        <taxon>Ostariophysi</taxon>
        <taxon>Cypriniformes</taxon>
        <taxon>Cyprinidae</taxon>
        <taxon>Cyprininae</taxon>
        <taxon>Carassius</taxon>
    </lineage>
</organism>
<protein>
    <recommendedName>
        <fullName>Ig heavy chain V region 5A</fullName>
    </recommendedName>
</protein>
<dbReference type="SMR" id="P19181"/>
<dbReference type="Proteomes" id="UP000515129">
    <property type="component" value="Unplaced"/>
</dbReference>
<dbReference type="GO" id="GO:0005576">
    <property type="term" value="C:extracellular region"/>
    <property type="evidence" value="ECO:0007669"/>
    <property type="project" value="UniProtKB-ARBA"/>
</dbReference>
<dbReference type="GO" id="GO:0019814">
    <property type="term" value="C:immunoglobulin complex"/>
    <property type="evidence" value="ECO:0007669"/>
    <property type="project" value="UniProtKB-KW"/>
</dbReference>
<dbReference type="GO" id="GO:0002250">
    <property type="term" value="P:adaptive immune response"/>
    <property type="evidence" value="ECO:0007669"/>
    <property type="project" value="UniProtKB-KW"/>
</dbReference>
<dbReference type="CDD" id="cd04981">
    <property type="entry name" value="IgV_H"/>
    <property type="match status" value="1"/>
</dbReference>
<dbReference type="FunFam" id="2.60.40.10:FF:000942">
    <property type="entry name" value="Immunoglobulin heavy variable 3-23"/>
    <property type="match status" value="1"/>
</dbReference>
<dbReference type="Gene3D" id="2.60.40.10">
    <property type="entry name" value="Immunoglobulins"/>
    <property type="match status" value="1"/>
</dbReference>
<dbReference type="InterPro" id="IPR007110">
    <property type="entry name" value="Ig-like_dom"/>
</dbReference>
<dbReference type="InterPro" id="IPR036179">
    <property type="entry name" value="Ig-like_dom_sf"/>
</dbReference>
<dbReference type="InterPro" id="IPR013783">
    <property type="entry name" value="Ig-like_fold"/>
</dbReference>
<dbReference type="InterPro" id="IPR013106">
    <property type="entry name" value="Ig_V-set"/>
</dbReference>
<dbReference type="InterPro" id="IPR050199">
    <property type="entry name" value="IgHV"/>
</dbReference>
<dbReference type="PANTHER" id="PTHR23266">
    <property type="entry name" value="IMMUNOGLOBULIN HEAVY CHAIN"/>
    <property type="match status" value="1"/>
</dbReference>
<dbReference type="Pfam" id="PF07686">
    <property type="entry name" value="V-set"/>
    <property type="match status" value="1"/>
</dbReference>
<dbReference type="SMART" id="SM00406">
    <property type="entry name" value="IGv"/>
    <property type="match status" value="1"/>
</dbReference>
<dbReference type="SUPFAM" id="SSF48726">
    <property type="entry name" value="Immunoglobulin"/>
    <property type="match status" value="1"/>
</dbReference>
<dbReference type="PROSITE" id="PS50835">
    <property type="entry name" value="IG_LIKE"/>
    <property type="match status" value="1"/>
</dbReference>
<keyword id="KW-1064">Adaptive immunity</keyword>
<keyword id="KW-1015">Disulfide bond</keyword>
<keyword id="KW-0391">Immunity</keyword>
<keyword id="KW-1280">Immunoglobulin</keyword>
<keyword id="KW-1185">Reference proteome</keyword>
<keyword id="KW-0732">Signal</keyword>
<feature type="signal peptide">
    <location>
        <begin position="1"/>
        <end position="19"/>
    </location>
</feature>
<feature type="chain" id="PRO_0000015213" description="Ig heavy chain V region 5A">
    <location>
        <begin position="20"/>
        <end position="116"/>
    </location>
</feature>
<feature type="region of interest" description="Framework-1">
    <location>
        <begin position="20"/>
        <end position="49"/>
    </location>
</feature>
<feature type="region of interest" description="Complementarity-determining-1">
    <location>
        <begin position="50"/>
        <end position="54"/>
    </location>
</feature>
<feature type="region of interest" description="Framework-2">
    <location>
        <begin position="55"/>
        <end position="68"/>
    </location>
</feature>
<feature type="region of interest" description="Complementarity-determining-2">
    <location>
        <begin position="69"/>
        <end position="84"/>
    </location>
</feature>
<feature type="region of interest" description="Framework-3">
    <location>
        <begin position="85"/>
        <end position="116"/>
    </location>
</feature>
<feature type="disulfide bond" evidence="1">
    <location>
        <begin position="41"/>
        <end position="114"/>
    </location>
</feature>
<feature type="non-terminal residue">
    <location>
        <position position="116"/>
    </location>
</feature>
<reference key="1">
    <citation type="journal article" date="1988" name="Proc. Natl. Acad. Sci. U.S.A.">
        <title>Immunoglobulin heavy chain variable region gene evolution: structure and family relationships of two genes and a pseudogene in a teleost fish.</title>
        <authorList>
            <person name="Wilson M.R."/>
            <person name="Middleton D."/>
            <person name="Warr G.W."/>
        </authorList>
    </citation>
    <scope>NUCLEOTIDE SEQUENCE</scope>
</reference>
<evidence type="ECO:0000255" key="1">
    <source>
        <dbReference type="PROSITE-ProRule" id="PRU00114"/>
    </source>
</evidence>
<proteinExistence type="predicted"/>